<dbReference type="EMBL" id="D87902">
    <property type="protein sequence ID" value="BAA13494.1"/>
    <property type="molecule type" value="mRNA"/>
</dbReference>
<dbReference type="EMBL" id="BC132452">
    <property type="protein sequence ID" value="AAI32453.1"/>
    <property type="molecule type" value="mRNA"/>
</dbReference>
<dbReference type="EMBL" id="BC138756">
    <property type="protein sequence ID" value="AAI38757.1"/>
    <property type="molecule type" value="mRNA"/>
</dbReference>
<dbReference type="CCDS" id="CCDS19952.1"/>
<dbReference type="PIR" id="JC4949">
    <property type="entry name" value="JC4949"/>
</dbReference>
<dbReference type="RefSeq" id="NP_031506.1">
    <property type="nucleotide sequence ID" value="NM_007480.2"/>
</dbReference>
<dbReference type="SMR" id="P84084"/>
<dbReference type="BioGRID" id="198188">
    <property type="interactions" value="17"/>
</dbReference>
<dbReference type="FunCoup" id="P84084">
    <property type="interactions" value="1772"/>
</dbReference>
<dbReference type="IntAct" id="P84084">
    <property type="interactions" value="6"/>
</dbReference>
<dbReference type="MINT" id="P84084"/>
<dbReference type="STRING" id="10090.ENSMUSP00000020717"/>
<dbReference type="GlyGen" id="P84084">
    <property type="glycosylation" value="1 site, 1 O-linked glycan (1 site)"/>
</dbReference>
<dbReference type="iPTMnet" id="P84084"/>
<dbReference type="PhosphoSitePlus" id="P84084"/>
<dbReference type="SwissPalm" id="P84084"/>
<dbReference type="jPOST" id="P84084"/>
<dbReference type="PaxDb" id="10090-ENSMUSP00000020717"/>
<dbReference type="PeptideAtlas" id="P84084"/>
<dbReference type="ProteomicsDB" id="273920"/>
<dbReference type="Pumba" id="P84084"/>
<dbReference type="TopDownProteomics" id="P84084"/>
<dbReference type="Antibodypedia" id="31827">
    <property type="antibodies" value="251 antibodies from 32 providers"/>
</dbReference>
<dbReference type="DNASU" id="11844"/>
<dbReference type="Ensembl" id="ENSMUST00000020717.12">
    <property type="protein sequence ID" value="ENSMUSP00000020717.6"/>
    <property type="gene ID" value="ENSMUSG00000020440.15"/>
</dbReference>
<dbReference type="GeneID" id="11844"/>
<dbReference type="KEGG" id="mmu:11844"/>
<dbReference type="UCSC" id="uc009bcq.1">
    <property type="organism name" value="mouse"/>
</dbReference>
<dbReference type="AGR" id="MGI:99434"/>
<dbReference type="CTD" id="381"/>
<dbReference type="MGI" id="MGI:99434">
    <property type="gene designation" value="Arf5"/>
</dbReference>
<dbReference type="VEuPathDB" id="HostDB:ENSMUSG00000020440"/>
<dbReference type="eggNOG" id="KOG0070">
    <property type="taxonomic scope" value="Eukaryota"/>
</dbReference>
<dbReference type="GeneTree" id="ENSGT00940000156878"/>
<dbReference type="HOGENOM" id="CLU_040729_9_3_1"/>
<dbReference type="InParanoid" id="P84084"/>
<dbReference type="OMA" id="SPQWYVQ"/>
<dbReference type="OrthoDB" id="2011769at2759"/>
<dbReference type="PhylomeDB" id="P84084"/>
<dbReference type="TreeFam" id="TF300808"/>
<dbReference type="Reactome" id="R-MMU-6807878">
    <property type="pathway name" value="COPI-mediated anterograde transport"/>
</dbReference>
<dbReference type="Reactome" id="R-MMU-6811434">
    <property type="pathway name" value="COPI-dependent Golgi-to-ER retrograde traffic"/>
</dbReference>
<dbReference type="BioGRID-ORCS" id="11844">
    <property type="hits" value="5 hits in 76 CRISPR screens"/>
</dbReference>
<dbReference type="CD-CODE" id="CE726F99">
    <property type="entry name" value="Postsynaptic density"/>
</dbReference>
<dbReference type="ChiTaRS" id="Arf5">
    <property type="organism name" value="mouse"/>
</dbReference>
<dbReference type="PRO" id="PR:P84084"/>
<dbReference type="Proteomes" id="UP000000589">
    <property type="component" value="Chromosome 6"/>
</dbReference>
<dbReference type="RNAct" id="P84084">
    <property type="molecule type" value="protein"/>
</dbReference>
<dbReference type="Bgee" id="ENSMUSG00000020440">
    <property type="expression patterns" value="Expressed in lip and 226 other cell types or tissues"/>
</dbReference>
<dbReference type="GO" id="GO:0005737">
    <property type="term" value="C:cytoplasm"/>
    <property type="evidence" value="ECO:0000314"/>
    <property type="project" value="MGI"/>
</dbReference>
<dbReference type="GO" id="GO:0005794">
    <property type="term" value="C:Golgi apparatus"/>
    <property type="evidence" value="ECO:0007669"/>
    <property type="project" value="UniProtKB-SubCell"/>
</dbReference>
<dbReference type="GO" id="GO:0048471">
    <property type="term" value="C:perinuclear region of cytoplasm"/>
    <property type="evidence" value="ECO:0007669"/>
    <property type="project" value="UniProtKB-SubCell"/>
</dbReference>
<dbReference type="GO" id="GO:0005886">
    <property type="term" value="C:plasma membrane"/>
    <property type="evidence" value="ECO:0000314"/>
    <property type="project" value="MGI"/>
</dbReference>
<dbReference type="GO" id="GO:0005525">
    <property type="term" value="F:GTP binding"/>
    <property type="evidence" value="ECO:0000304"/>
    <property type="project" value="MGI"/>
</dbReference>
<dbReference type="GO" id="GO:0003924">
    <property type="term" value="F:GTPase activity"/>
    <property type="evidence" value="ECO:0007669"/>
    <property type="project" value="InterPro"/>
</dbReference>
<dbReference type="GO" id="GO:0015031">
    <property type="term" value="P:protein transport"/>
    <property type="evidence" value="ECO:0000304"/>
    <property type="project" value="MGI"/>
</dbReference>
<dbReference type="GO" id="GO:0006890">
    <property type="term" value="P:retrograde vesicle-mediated transport, Golgi to endoplasmic reticulum"/>
    <property type="evidence" value="ECO:0007669"/>
    <property type="project" value="Ensembl"/>
</dbReference>
<dbReference type="CDD" id="cd04150">
    <property type="entry name" value="Arf1_5_like"/>
    <property type="match status" value="1"/>
</dbReference>
<dbReference type="FunFam" id="3.40.50.300:FF:000024">
    <property type="entry name" value="ADP-ribosylation factor 1"/>
    <property type="match status" value="1"/>
</dbReference>
<dbReference type="Gene3D" id="3.40.50.300">
    <property type="entry name" value="P-loop containing nucleotide triphosphate hydrolases"/>
    <property type="match status" value="1"/>
</dbReference>
<dbReference type="InterPro" id="IPR045872">
    <property type="entry name" value="Arf1-5-like"/>
</dbReference>
<dbReference type="InterPro" id="IPR027417">
    <property type="entry name" value="P-loop_NTPase"/>
</dbReference>
<dbReference type="InterPro" id="IPR005225">
    <property type="entry name" value="Small_GTP-bd"/>
</dbReference>
<dbReference type="InterPro" id="IPR024156">
    <property type="entry name" value="Small_GTPase_ARF"/>
</dbReference>
<dbReference type="InterPro" id="IPR006689">
    <property type="entry name" value="Small_GTPase_ARF/SAR"/>
</dbReference>
<dbReference type="NCBIfam" id="TIGR00231">
    <property type="entry name" value="small_GTP"/>
    <property type="match status" value="1"/>
</dbReference>
<dbReference type="PANTHER" id="PTHR11711">
    <property type="entry name" value="ADP RIBOSYLATION FACTOR-RELATED"/>
    <property type="match status" value="1"/>
</dbReference>
<dbReference type="Pfam" id="PF00025">
    <property type="entry name" value="Arf"/>
    <property type="match status" value="1"/>
</dbReference>
<dbReference type="PRINTS" id="PR00328">
    <property type="entry name" value="SAR1GTPBP"/>
</dbReference>
<dbReference type="SMART" id="SM00177">
    <property type="entry name" value="ARF"/>
    <property type="match status" value="1"/>
</dbReference>
<dbReference type="SMART" id="SM00175">
    <property type="entry name" value="RAB"/>
    <property type="match status" value="1"/>
</dbReference>
<dbReference type="SMART" id="SM00178">
    <property type="entry name" value="SAR"/>
    <property type="match status" value="1"/>
</dbReference>
<dbReference type="SUPFAM" id="SSF52540">
    <property type="entry name" value="P-loop containing nucleoside triphosphate hydrolases"/>
    <property type="match status" value="1"/>
</dbReference>
<dbReference type="PROSITE" id="PS51417">
    <property type="entry name" value="ARF"/>
    <property type="match status" value="1"/>
</dbReference>
<evidence type="ECO:0000250" key="1"/>
<evidence type="ECO:0000250" key="2">
    <source>
        <dbReference type="UniProtKB" id="P84085"/>
    </source>
</evidence>
<evidence type="ECO:0000269" key="3">
    <source>
    </source>
</evidence>
<evidence type="ECO:0000305" key="4"/>
<protein>
    <recommendedName>
        <fullName>ADP-ribosylation factor 5</fullName>
    </recommendedName>
</protein>
<organism>
    <name type="scientific">Mus musculus</name>
    <name type="common">Mouse</name>
    <dbReference type="NCBI Taxonomy" id="10090"/>
    <lineage>
        <taxon>Eukaryota</taxon>
        <taxon>Metazoa</taxon>
        <taxon>Chordata</taxon>
        <taxon>Craniata</taxon>
        <taxon>Vertebrata</taxon>
        <taxon>Euteleostomi</taxon>
        <taxon>Mammalia</taxon>
        <taxon>Eutheria</taxon>
        <taxon>Euarchontoglires</taxon>
        <taxon>Glires</taxon>
        <taxon>Rodentia</taxon>
        <taxon>Myomorpha</taxon>
        <taxon>Muroidea</taxon>
        <taxon>Muridae</taxon>
        <taxon>Murinae</taxon>
        <taxon>Mus</taxon>
        <taxon>Mus</taxon>
    </lineage>
</organism>
<proteinExistence type="evidence at protein level"/>
<feature type="initiator methionine" description="Removed" evidence="2">
    <location>
        <position position="1"/>
    </location>
</feature>
<feature type="chain" id="PRO_0000207397" description="ADP-ribosylation factor 5">
    <location>
        <begin position="2"/>
        <end position="180"/>
    </location>
</feature>
<feature type="binding site" evidence="1">
    <location>
        <begin position="24"/>
        <end position="31"/>
    </location>
    <ligand>
        <name>GTP</name>
        <dbReference type="ChEBI" id="CHEBI:37565"/>
    </ligand>
</feature>
<feature type="binding site" evidence="1">
    <location>
        <begin position="67"/>
        <end position="71"/>
    </location>
    <ligand>
        <name>GTP</name>
        <dbReference type="ChEBI" id="CHEBI:37565"/>
    </ligand>
</feature>
<feature type="binding site" evidence="1">
    <location>
        <begin position="126"/>
        <end position="129"/>
    </location>
    <ligand>
        <name>GTP</name>
        <dbReference type="ChEBI" id="CHEBI:37565"/>
    </ligand>
</feature>
<feature type="lipid moiety-binding region" description="N-myristoyl glycine" evidence="2">
    <location>
        <position position="2"/>
    </location>
</feature>
<gene>
    <name type="primary">Arf5</name>
</gene>
<name>ARF5_MOUSE</name>
<keyword id="KW-0963">Cytoplasm</keyword>
<keyword id="KW-0931">ER-Golgi transport</keyword>
<keyword id="KW-0333">Golgi apparatus</keyword>
<keyword id="KW-0342">GTP-binding</keyword>
<keyword id="KW-0449">Lipoprotein</keyword>
<keyword id="KW-0472">Membrane</keyword>
<keyword id="KW-0519">Myristate</keyword>
<keyword id="KW-0547">Nucleotide-binding</keyword>
<keyword id="KW-0653">Protein transport</keyword>
<keyword id="KW-1185">Reference proteome</keyword>
<keyword id="KW-0813">Transport</keyword>
<reference key="1">
    <citation type="journal article" date="1996" name="J. Biochem.">
        <title>Structure and intracellular localization of mouse ADP-ribosylation factors type 1 to type 6 (ARF1-ARF6).</title>
        <authorList>
            <person name="Hosaka M."/>
            <person name="Toda K."/>
            <person name="Takatsu H."/>
            <person name="Torii S."/>
            <person name="Murakami K."/>
            <person name="Nakayama K."/>
        </authorList>
    </citation>
    <scope>NUCLEOTIDE SEQUENCE [MRNA]</scope>
    <source>
        <strain>ICR</strain>
        <tissue>Brain</tissue>
    </source>
</reference>
<reference key="2">
    <citation type="journal article" date="2004" name="Genome Res.">
        <title>The status, quality, and expansion of the NIH full-length cDNA project: the Mammalian Gene Collection (MGC).</title>
        <authorList>
            <consortium name="The MGC Project Team"/>
        </authorList>
    </citation>
    <scope>NUCLEOTIDE SEQUENCE [LARGE SCALE MRNA]</scope>
    <source>
        <tissue>Lung</tissue>
    </source>
</reference>
<reference key="3">
    <citation type="journal article" date="2002" name="Biochem. J.">
        <title>GGA proteins associate with Golgi membranes through interaction between their GGAH domains and ADP-ribosylation factors.</title>
        <authorList>
            <person name="Takatsu H."/>
            <person name="Yoshino K."/>
            <person name="Toda K."/>
            <person name="Nakayama K."/>
        </authorList>
    </citation>
    <scope>FUNCTION</scope>
    <scope>INTERACTION WITH GGA1; GGA2 AND GGA3</scope>
    <scope>SUBCELLULAR LOCATION</scope>
</reference>
<reference key="4">
    <citation type="journal article" date="2010" name="Cell">
        <title>A tissue-specific atlas of mouse protein phosphorylation and expression.</title>
        <authorList>
            <person name="Huttlin E.L."/>
            <person name="Jedrychowski M.P."/>
            <person name="Elias J.E."/>
            <person name="Goswami T."/>
            <person name="Rad R."/>
            <person name="Beausoleil S.A."/>
            <person name="Villen J."/>
            <person name="Haas W."/>
            <person name="Sowa M.E."/>
            <person name="Gygi S.P."/>
        </authorList>
    </citation>
    <scope>IDENTIFICATION BY MASS SPECTROMETRY [LARGE SCALE ANALYSIS]</scope>
    <source>
        <tissue>Brain</tissue>
        <tissue>Brown adipose tissue</tissue>
        <tissue>Heart</tissue>
        <tissue>Kidney</tissue>
        <tissue>Liver</tissue>
        <tissue>Lung</tissue>
        <tissue>Pancreas</tissue>
        <tissue>Spleen</tissue>
        <tissue>Testis</tissue>
    </source>
</reference>
<comment type="function">
    <text evidence="3">GTP-binding protein involved in protein trafficking; may modulate vesicle budding and uncoating within the Golgi apparatus.</text>
</comment>
<comment type="subunit">
    <text evidence="2 3">Interacts (when activated) with GGA1, GGA2 and GGA3; the interaction is required for proper subcellular location of GGA1, GGA2 and GGA3 (PubMed:11950392). Binds ASAP2 (By similarity). Interacts with NCS1/FREQ at the Golgi complex. Interacts with RAB11FIP3 and RAB11FIP4 (By similarity).</text>
</comment>
<comment type="interaction">
    <interactant intactId="EBI-7569461">
        <id>P84084</id>
    </interactant>
    <interactant intactId="EBI-7569313">
        <id>Q8BYR5</id>
        <label>Cadps2</label>
    </interactant>
    <organismsDiffer>false</organismsDiffer>
    <experiments>5</experiments>
</comment>
<comment type="subcellular location">
    <subcellularLocation>
        <location>Golgi apparatus</location>
    </subcellularLocation>
    <subcellularLocation>
        <location evidence="2">Cytoplasm</location>
        <location evidence="2">Perinuclear region</location>
    </subcellularLocation>
    <subcellularLocation>
        <location evidence="2">Membrane</location>
        <topology evidence="2">Lipid-anchor</topology>
    </subcellularLocation>
    <subcellularLocation>
        <location evidence="3">Golgi apparatus</location>
        <location evidence="3">trans-Golgi network membrane</location>
        <topology evidence="4">Lipid-anchor</topology>
    </subcellularLocation>
</comment>
<comment type="tissue specificity">
    <text>Ubiquitous.</text>
</comment>
<comment type="similarity">
    <text evidence="4">Belongs to the small GTPase superfamily. Arf family.</text>
</comment>
<accession>P84084</accession>
<accession>A2RTC5</accession>
<accession>P26437</accession>
<sequence>MGLTVSALFSRIFGKKQMRILMVGLDAAGKTTILYKLKLGEIVTTIPTIGFNVETVEYKNICFTVWDVGGQDKIRPLWRHYFQNTQGLIFVVDSNDRERVQESADELQKMLQEDELRDAVLLVFANKQDMPNAMPVSELTDKLGLQHLRSRTWYVQATCATQGTGLYDGLDWLSHELSKR</sequence>